<protein>
    <recommendedName>
        <fullName evidence="5">Disease resistance protein PIK6-NP</fullName>
    </recommendedName>
</protein>
<accession>Q2QZF1</accession>
<feature type="chain" id="PRO_0000444666" description="Disease resistance protein PIK6-NP">
    <location>
        <begin position="1"/>
        <end position="1044"/>
    </location>
</feature>
<feature type="domain" description="NB-ARC" evidence="2">
    <location>
        <begin position="187"/>
        <end position="543"/>
    </location>
</feature>
<feature type="repeat" description="LRR 1" evidence="2">
    <location>
        <begin position="635"/>
        <end position="657"/>
    </location>
</feature>
<feature type="repeat" description="LRR 2" evidence="2">
    <location>
        <begin position="682"/>
        <end position="705"/>
    </location>
</feature>
<feature type="repeat" description="LRR 3" evidence="2">
    <location>
        <begin position="706"/>
        <end position="728"/>
    </location>
</feature>
<feature type="repeat" description="LRR 4" evidence="2">
    <location>
        <begin position="808"/>
        <end position="834"/>
    </location>
</feature>
<feature type="repeat" description="LRR 5" evidence="2">
    <location>
        <begin position="840"/>
        <end position="862"/>
    </location>
</feature>
<feature type="repeat" description="LRR 6" evidence="2">
    <location>
        <begin position="866"/>
        <end position="888"/>
    </location>
</feature>
<feature type="repeat" description="LRR 7" evidence="2">
    <location>
        <begin position="889"/>
        <end position="911"/>
    </location>
</feature>
<feature type="repeat" description="LRR 8" evidence="2">
    <location>
        <begin position="935"/>
        <end position="958"/>
    </location>
</feature>
<feature type="repeat" description="LRR 9" evidence="2">
    <location>
        <begin position="980"/>
        <end position="1004"/>
    </location>
</feature>
<feature type="region of interest" description="Structured coiled coil (CC) domain" evidence="1">
    <location>
        <begin position="3"/>
        <end position="184"/>
    </location>
</feature>
<feature type="region of interest" description="Disordered" evidence="3">
    <location>
        <begin position="258"/>
        <end position="302"/>
    </location>
</feature>
<feature type="region of interest" description="Disordered" evidence="3">
    <location>
        <begin position="737"/>
        <end position="771"/>
    </location>
</feature>
<name>PIK6_ORYSJ</name>
<evidence type="ECO:0000250" key="1">
    <source>
        <dbReference type="UniProtKB" id="B5UBC0"/>
    </source>
</evidence>
<evidence type="ECO:0000255" key="2"/>
<evidence type="ECO:0000256" key="3">
    <source>
        <dbReference type="SAM" id="MobiDB-lite"/>
    </source>
</evidence>
<evidence type="ECO:0000303" key="4">
    <source>
    </source>
</evidence>
<evidence type="ECO:0000305" key="5"/>
<evidence type="ECO:0000305" key="6">
    <source>
    </source>
</evidence>
<evidence type="ECO:0000305" key="7">
    <source>
    </source>
</evidence>
<evidence type="ECO:0000312" key="8">
    <source>
        <dbReference type="EMBL" id="ABA95386.1"/>
    </source>
</evidence>
<evidence type="ECO:0000312" key="9">
    <source>
        <dbReference type="EMBL" id="BAF28850.1"/>
    </source>
</evidence>
<evidence type="ECO:0000312" key="10">
    <source>
        <dbReference type="EMBL" id="EAZ41900.1"/>
    </source>
</evidence>
<proteinExistence type="evidence at transcript level"/>
<reference key="1">
    <citation type="journal article" date="2005" name="BMC Biol.">
        <title>The sequence of rice chromosomes 11 and 12, rich in disease resistance genes and recent gene duplications.</title>
        <authorList>
            <consortium name="The rice chromosomes 11 and 12 sequencing consortia"/>
        </authorList>
    </citation>
    <scope>NUCLEOTIDE SEQUENCE [LARGE SCALE GENOMIC DNA]</scope>
    <source>
        <strain>cv. Nipponbare</strain>
    </source>
</reference>
<reference key="2">
    <citation type="journal article" date="2005" name="Nature">
        <title>The map-based sequence of the rice genome.</title>
        <authorList>
            <consortium name="International rice genome sequencing project (IRGSP)"/>
        </authorList>
    </citation>
    <scope>NUCLEOTIDE SEQUENCE [LARGE SCALE GENOMIC DNA]</scope>
    <source>
        <strain>cv. Nipponbare</strain>
    </source>
</reference>
<reference key="3">
    <citation type="journal article" date="2008" name="Nucleic Acids Res.">
        <title>The rice annotation project database (RAP-DB): 2008 update.</title>
        <authorList>
            <consortium name="The rice annotation project (RAP)"/>
        </authorList>
    </citation>
    <scope>GENOME REANNOTATION</scope>
    <source>
        <strain>cv. Nipponbare</strain>
    </source>
</reference>
<reference key="4">
    <citation type="journal article" date="2013" name="Rice">
        <title>Improvement of the Oryza sativa Nipponbare reference genome using next generation sequence and optical map data.</title>
        <authorList>
            <person name="Kawahara Y."/>
            <person name="de la Bastide M."/>
            <person name="Hamilton J.P."/>
            <person name="Kanamori H."/>
            <person name="McCombie W.R."/>
            <person name="Ouyang S."/>
            <person name="Schwartz D.C."/>
            <person name="Tanaka T."/>
            <person name="Wu J."/>
            <person name="Zhou S."/>
            <person name="Childs K.L."/>
            <person name="Davidson R.M."/>
            <person name="Lin H."/>
            <person name="Quesada-Ocampo L."/>
            <person name="Vaillancourt B."/>
            <person name="Sakai H."/>
            <person name="Lee S.S."/>
            <person name="Kim J."/>
            <person name="Numa H."/>
            <person name="Itoh T."/>
            <person name="Buell C.R."/>
            <person name="Matsumoto T."/>
        </authorList>
    </citation>
    <scope>GENOME REANNOTATION</scope>
    <source>
        <strain>cv. Nipponbare</strain>
    </source>
</reference>
<reference key="5">
    <citation type="journal article" date="2005" name="PLoS Biol.">
        <title>The genomes of Oryza sativa: a history of duplications.</title>
        <authorList>
            <person name="Yu J."/>
            <person name="Wang J."/>
            <person name="Lin W."/>
            <person name="Li S."/>
            <person name="Li H."/>
            <person name="Zhou J."/>
            <person name="Ni P."/>
            <person name="Dong W."/>
            <person name="Hu S."/>
            <person name="Zeng C."/>
            <person name="Zhang J."/>
            <person name="Zhang Y."/>
            <person name="Li R."/>
            <person name="Xu Z."/>
            <person name="Li S."/>
            <person name="Li X."/>
            <person name="Zheng H."/>
            <person name="Cong L."/>
            <person name="Lin L."/>
            <person name="Yin J."/>
            <person name="Geng J."/>
            <person name="Li G."/>
            <person name="Shi J."/>
            <person name="Liu J."/>
            <person name="Lv H."/>
            <person name="Li J."/>
            <person name="Wang J."/>
            <person name="Deng Y."/>
            <person name="Ran L."/>
            <person name="Shi X."/>
            <person name="Wang X."/>
            <person name="Wu Q."/>
            <person name="Li C."/>
            <person name="Ren X."/>
            <person name="Wang J."/>
            <person name="Wang X."/>
            <person name="Li D."/>
            <person name="Liu D."/>
            <person name="Zhang X."/>
            <person name="Ji Z."/>
            <person name="Zhao W."/>
            <person name="Sun Y."/>
            <person name="Zhang Z."/>
            <person name="Bao J."/>
            <person name="Han Y."/>
            <person name="Dong L."/>
            <person name="Ji J."/>
            <person name="Chen P."/>
            <person name="Wu S."/>
            <person name="Liu J."/>
            <person name="Xiao Y."/>
            <person name="Bu D."/>
            <person name="Tan J."/>
            <person name="Yang L."/>
            <person name="Ye C."/>
            <person name="Zhang J."/>
            <person name="Xu J."/>
            <person name="Zhou Y."/>
            <person name="Yu Y."/>
            <person name="Zhang B."/>
            <person name="Zhuang S."/>
            <person name="Wei H."/>
            <person name="Liu B."/>
            <person name="Lei M."/>
            <person name="Yu H."/>
            <person name="Li Y."/>
            <person name="Xu H."/>
            <person name="Wei S."/>
            <person name="He X."/>
            <person name="Fang L."/>
            <person name="Zhang Z."/>
            <person name="Zhang Y."/>
            <person name="Huang X."/>
            <person name="Su Z."/>
            <person name="Tong W."/>
            <person name="Li J."/>
            <person name="Tong Z."/>
            <person name="Li S."/>
            <person name="Ye J."/>
            <person name="Wang L."/>
            <person name="Fang L."/>
            <person name="Lei T."/>
            <person name="Chen C.-S."/>
            <person name="Chen H.-C."/>
            <person name="Xu Z."/>
            <person name="Li H."/>
            <person name="Huang H."/>
            <person name="Zhang F."/>
            <person name="Xu H."/>
            <person name="Li N."/>
            <person name="Zhao C."/>
            <person name="Li S."/>
            <person name="Dong L."/>
            <person name="Huang Y."/>
            <person name="Li L."/>
            <person name="Xi Y."/>
            <person name="Qi Q."/>
            <person name="Li W."/>
            <person name="Zhang B."/>
            <person name="Hu W."/>
            <person name="Zhang Y."/>
            <person name="Tian X."/>
            <person name="Jiao Y."/>
            <person name="Liang X."/>
            <person name="Jin J."/>
            <person name="Gao L."/>
            <person name="Zheng W."/>
            <person name="Hao B."/>
            <person name="Liu S.-M."/>
            <person name="Wang W."/>
            <person name="Yuan L."/>
            <person name="Cao M."/>
            <person name="McDermott J."/>
            <person name="Samudrala R."/>
            <person name="Wang J."/>
            <person name="Wong G.K.-S."/>
            <person name="Yang H."/>
        </authorList>
    </citation>
    <scope>NUCLEOTIDE SEQUENCE [LARGE SCALE GENOMIC DNA]</scope>
    <source>
        <strain>cv. Nipponbare</strain>
    </source>
</reference>
<reference key="6">
    <citation type="journal article" date="2003" name="Science">
        <title>Collection, mapping, and annotation of over 28,000 cDNA clones from japonica rice.</title>
        <authorList>
            <consortium name="The rice full-length cDNA consortium"/>
        </authorList>
    </citation>
    <scope>NUCLEOTIDE SEQUENCE [LARGE SCALE MRNA]</scope>
    <source>
        <strain>cv. Nipponbare</strain>
    </source>
</reference>
<reference key="7">
    <citation type="journal article" date="2008" name="Genetics">
        <title>Two adjacent nucleotide-binding site-leucine-rich repeat class genes are required to confer Pikm-specific rice blast resistance.</title>
        <authorList>
            <person name="Ashikawa I."/>
            <person name="Hayashi N."/>
            <person name="Yamane H."/>
            <person name="Kanamori H."/>
            <person name="Wu J."/>
            <person name="Matsumoto T."/>
            <person name="Ono K."/>
            <person name="Yano M."/>
        </authorList>
    </citation>
    <scope>IDENTIFICATION</scope>
    <scope>FUNCTION</scope>
    <source>
        <strain>cv. Nipponbare</strain>
    </source>
</reference>
<reference key="8">
    <citation type="journal article" date="2011" name="New Phytol.">
        <title>The isolation and characterization of Pik, a rice blast resistance gene which emerged after rice domestication.</title>
        <authorList>
            <person name="Zhai C."/>
            <person name="Lin F."/>
            <person name="Dong Z."/>
            <person name="He X."/>
            <person name="Yuan B."/>
            <person name="Zeng X."/>
            <person name="Wang L."/>
            <person name="Pan Q."/>
        </authorList>
    </citation>
    <scope>IDENTIFICATION</scope>
    <scope>FUNCTION</scope>
    <source>
        <strain>cv. Nipponbare</strain>
    </source>
</reference>
<dbReference type="EMBL" id="AP011111">
    <property type="protein sequence ID" value="BAM28949.1"/>
    <property type="molecule type" value="Genomic_DNA"/>
</dbReference>
<dbReference type="EMBL" id="DP000010">
    <property type="protein sequence ID" value="ABA95386.1"/>
    <property type="molecule type" value="Genomic_DNA"/>
</dbReference>
<dbReference type="EMBL" id="AP008217">
    <property type="protein sequence ID" value="BAF28850.1"/>
    <property type="molecule type" value="Genomic_DNA"/>
</dbReference>
<dbReference type="EMBL" id="AP014967">
    <property type="protein sequence ID" value="BAT15298.1"/>
    <property type="molecule type" value="Genomic_DNA"/>
</dbReference>
<dbReference type="EMBL" id="CM000145">
    <property type="protein sequence ID" value="EAZ41900.1"/>
    <property type="molecule type" value="Genomic_DNA"/>
</dbReference>
<dbReference type="EMBL" id="AK073759">
    <property type="protein sequence ID" value="BAG93625.1"/>
    <property type="molecule type" value="mRNA"/>
</dbReference>
<dbReference type="RefSeq" id="XP_015617985.1">
    <property type="nucleotide sequence ID" value="XM_015762499.1"/>
</dbReference>
<dbReference type="SMR" id="Q2QZF1"/>
<dbReference type="FunCoup" id="Q2QZF1">
    <property type="interactions" value="1"/>
</dbReference>
<dbReference type="STRING" id="39947.Q2QZF1"/>
<dbReference type="PaxDb" id="39947-Q2QZF1"/>
<dbReference type="EnsemblPlants" id="Os11t0689100-01">
    <property type="protein sequence ID" value="Os11t0689100-01"/>
    <property type="gene ID" value="Os11g0689100"/>
</dbReference>
<dbReference type="Gramene" id="Os11t0689100-01">
    <property type="protein sequence ID" value="Os11t0689100-01"/>
    <property type="gene ID" value="Os11g0689100"/>
</dbReference>
<dbReference type="KEGG" id="dosa:Os11g0689100"/>
<dbReference type="eggNOG" id="KOG4658">
    <property type="taxonomic scope" value="Eukaryota"/>
</dbReference>
<dbReference type="InParanoid" id="Q2QZF1"/>
<dbReference type="OMA" id="SDKNAMP"/>
<dbReference type="OrthoDB" id="667746at2759"/>
<dbReference type="Proteomes" id="UP000000763">
    <property type="component" value="Chromosome 11"/>
</dbReference>
<dbReference type="Proteomes" id="UP000007752">
    <property type="component" value="Chromosome 8"/>
</dbReference>
<dbReference type="Proteomes" id="UP000059680">
    <property type="component" value="Chromosome 11"/>
</dbReference>
<dbReference type="ExpressionAtlas" id="Q2QZF1">
    <property type="expression patterns" value="baseline and differential"/>
</dbReference>
<dbReference type="GO" id="GO:0043531">
    <property type="term" value="F:ADP binding"/>
    <property type="evidence" value="ECO:0007669"/>
    <property type="project" value="InterPro"/>
</dbReference>
<dbReference type="GO" id="GO:0005524">
    <property type="term" value="F:ATP binding"/>
    <property type="evidence" value="ECO:0007669"/>
    <property type="project" value="UniProtKB-KW"/>
</dbReference>
<dbReference type="GO" id="GO:0098542">
    <property type="term" value="P:defense response to other organism"/>
    <property type="evidence" value="ECO:0000318"/>
    <property type="project" value="GO_Central"/>
</dbReference>
<dbReference type="CDD" id="cd14798">
    <property type="entry name" value="RX-CC_like"/>
    <property type="match status" value="1"/>
</dbReference>
<dbReference type="FunFam" id="1.10.10.10:FF:000322">
    <property type="entry name" value="Probable disease resistance protein At1g63360"/>
    <property type="match status" value="1"/>
</dbReference>
<dbReference type="Gene3D" id="1.20.5.4130">
    <property type="match status" value="1"/>
</dbReference>
<dbReference type="Gene3D" id="3.40.50.300">
    <property type="entry name" value="P-loop containing nucleotide triphosphate hydrolases"/>
    <property type="match status" value="1"/>
</dbReference>
<dbReference type="Gene3D" id="3.80.10.10">
    <property type="entry name" value="Ribonuclease Inhibitor"/>
    <property type="match status" value="2"/>
</dbReference>
<dbReference type="Gene3D" id="1.10.10.10">
    <property type="entry name" value="Winged helix-like DNA-binding domain superfamily/Winged helix DNA-binding domain"/>
    <property type="match status" value="1"/>
</dbReference>
<dbReference type="InterPro" id="IPR044974">
    <property type="entry name" value="Disease_R_plants"/>
</dbReference>
<dbReference type="InterPro" id="IPR032675">
    <property type="entry name" value="LRR_dom_sf"/>
</dbReference>
<dbReference type="InterPro" id="IPR055414">
    <property type="entry name" value="LRR_R13L4/SHOC2-like"/>
</dbReference>
<dbReference type="InterPro" id="IPR002182">
    <property type="entry name" value="NB-ARC"/>
</dbReference>
<dbReference type="InterPro" id="IPR027417">
    <property type="entry name" value="P-loop_NTPase"/>
</dbReference>
<dbReference type="InterPro" id="IPR038005">
    <property type="entry name" value="RX-like_CC"/>
</dbReference>
<dbReference type="InterPro" id="IPR041118">
    <property type="entry name" value="Rx_N"/>
</dbReference>
<dbReference type="InterPro" id="IPR036388">
    <property type="entry name" value="WH-like_DNA-bd_sf"/>
</dbReference>
<dbReference type="PANTHER" id="PTHR23155:SF1013">
    <property type="entry name" value="DISEASE RESISTANCE PROTEIN PIK6-NP"/>
    <property type="match status" value="1"/>
</dbReference>
<dbReference type="PANTHER" id="PTHR23155">
    <property type="entry name" value="DISEASE RESISTANCE PROTEIN RP"/>
    <property type="match status" value="1"/>
</dbReference>
<dbReference type="Pfam" id="PF23598">
    <property type="entry name" value="LRR_14"/>
    <property type="match status" value="2"/>
</dbReference>
<dbReference type="Pfam" id="PF00931">
    <property type="entry name" value="NB-ARC"/>
    <property type="match status" value="2"/>
</dbReference>
<dbReference type="Pfam" id="PF18052">
    <property type="entry name" value="Rx_N"/>
    <property type="match status" value="1"/>
</dbReference>
<dbReference type="Pfam" id="PF23559">
    <property type="entry name" value="WH_DRP"/>
    <property type="match status" value="1"/>
</dbReference>
<dbReference type="PRINTS" id="PR00364">
    <property type="entry name" value="DISEASERSIST"/>
</dbReference>
<dbReference type="SUPFAM" id="SSF52058">
    <property type="entry name" value="L domain-like"/>
    <property type="match status" value="1"/>
</dbReference>
<dbReference type="SUPFAM" id="SSF52540">
    <property type="entry name" value="P-loop containing nucleoside triphosphate hydrolases"/>
    <property type="match status" value="1"/>
</dbReference>
<gene>
    <name evidence="4" type="primary">PIK6-NP</name>
    <name evidence="9" type="ordered locus">Os11g0689100</name>
    <name evidence="8" type="ordered locus">LOC_Os11g46210</name>
    <name evidence="10" type="ORF">OsJ_26447</name>
</gene>
<sequence length="1044" mass="117003">MELAVGASEATMRSLLGKLGNLLAQEYSLVSGVRGDIQYINDELASMQAFLRDLSVVTEGHNHDNRRKDWMKQIRDVAYDVEDCIDDFAHRLPQDSISDAKCSFILTKMYELLTWWPRRDIASRIAELKVRAQQIADRRNRYGVNNPEHCDSSNSPRPRAHAAAQDIAEYQDTKPQIVSIKEPVGMKTVMENLEKWLTEPQPDKGRAVLSIVGFGGVGKTTIAMALYRKVSGKFDCQASVAVSQNYDEDEVLRSILNQVSKQEEAGGSTESSSRDENTREPQGSSSTSSREENTAESGTKRMLNKLKKALPLSLLGGNDDKTSVRQQETMGSLQLREELKRRLAEKRYILLIDDIWSAKTWNSIIIPFLPSENDKDSRIIVTTRFHAVGSTCSPRHKNDEATSSPGHGKDLLHKVDFLTGDKPLDLFNASIPDPMKRTDRDKKLSKICGGLPLAIVTMAGLVACNPNKANSDWSKLCESLFPYPVTTLNLDGVTRILDCCYNDLPADLKTCLLYLSIFPKGWKISRKRLARRWIAEGFATEKQGLTEEEVAEAYFNQLARRNLIRPVEHGSNGKVKAFQVHDMVLEYIMSKSIEENFITVVGGHWQMTAPSNKVRRLSLQSSGSKHGNSTKGLNLAQVRSLTVFGNLNHVPFHSFNYGIIQVLDLEGWKGLKERHVTEICQMLVLKYLSIRRTEIAKIPSKIEKLEYLETLDIRETYVEELPKSVGQLKRISSILGGNKNTRKGLRLPQEKRNKAMKNPSPQGKTKEPAEKGFLSQEKAKGTMKSLRVLSGIEIVDESAAVAASLHQLTGLRKLAIYKLKISEENDTFKELLSSIEYLGSCGLQTLAINDENSKFINSLYNMSAPPRYLVSLELSGKLKWLPEWITSITTLNKLTISITVLTTETLEILRNLPSLFSLTFAFSLSAAKQDQDTVKGILEDNKLATDGEIVIPAKEFKSLKLLRFFAPFVPKLSFPDKSAMPALEIIEMRFQEFEGLFGIEILENLREVHLKVSDGAEAITKFLVSDLKDNTEKPKVFVDGIVTA</sequence>
<organism>
    <name type="scientific">Oryza sativa subsp. japonica</name>
    <name type="common">Rice</name>
    <dbReference type="NCBI Taxonomy" id="39947"/>
    <lineage>
        <taxon>Eukaryota</taxon>
        <taxon>Viridiplantae</taxon>
        <taxon>Streptophyta</taxon>
        <taxon>Embryophyta</taxon>
        <taxon>Tracheophyta</taxon>
        <taxon>Spermatophyta</taxon>
        <taxon>Magnoliopsida</taxon>
        <taxon>Liliopsida</taxon>
        <taxon>Poales</taxon>
        <taxon>Poaceae</taxon>
        <taxon>BOP clade</taxon>
        <taxon>Oryzoideae</taxon>
        <taxon>Oryzeae</taxon>
        <taxon>Oryzinae</taxon>
        <taxon>Oryza</taxon>
        <taxon>Oryza sativa</taxon>
    </lineage>
</organism>
<keyword id="KW-0067">ATP-binding</keyword>
<keyword id="KW-0175">Coiled coil</keyword>
<keyword id="KW-0433">Leucine-rich repeat</keyword>
<keyword id="KW-0547">Nucleotide-binding</keyword>
<keyword id="KW-0611">Plant defense</keyword>
<keyword id="KW-1185">Reference proteome</keyword>
<keyword id="KW-0677">Repeat</keyword>
<comment type="function">
    <text evidence="6 7">Probable disease resistance protein. Resistance proteins guard the plant against pathogens that contain an appropriate avirulence protein via an indirect interaction with this avirulence protein. That triggers a defense system including the hypersensitive response, which restricts the pathogen growth. At the opposite of cultivar Kusabue, the cultivar Nipponbare doesn't recognize the effector avirulence protein AVR-Pik from M.oryzae.</text>
</comment>
<comment type="similarity">
    <text evidence="5">Belongs to the disease resistance NB-LRR family.</text>
</comment>